<sequence>MSAALSRDATLLAFDYGEKRIGVAVGNLLTRTARALVIVRNLNREHRFKAVGELIAEWKPDALVVGLPLHPDGAPHEMTQRAMRFGNQLNGRFNLPVSWVDERYSSVEARAGLRARGDAADRVDAEAARVILQQYLDGLPDHHEFN</sequence>
<proteinExistence type="inferred from homology"/>
<reference key="1">
    <citation type="journal article" date="2004" name="Proc. Natl. Acad. Sci. U.S.A.">
        <title>Structural flexibility in the Burkholderia mallei genome.</title>
        <authorList>
            <person name="Nierman W.C."/>
            <person name="DeShazer D."/>
            <person name="Kim H.S."/>
            <person name="Tettelin H."/>
            <person name="Nelson K.E."/>
            <person name="Feldblyum T.V."/>
            <person name="Ulrich R.L."/>
            <person name="Ronning C.M."/>
            <person name="Brinkac L.M."/>
            <person name="Daugherty S.C."/>
            <person name="Davidsen T.D."/>
            <person name="DeBoy R.T."/>
            <person name="Dimitrov G."/>
            <person name="Dodson R.J."/>
            <person name="Durkin A.S."/>
            <person name="Gwinn M.L."/>
            <person name="Haft D.H."/>
            <person name="Khouri H.M."/>
            <person name="Kolonay J.F."/>
            <person name="Madupu R."/>
            <person name="Mohammoud Y."/>
            <person name="Nelson W.C."/>
            <person name="Radune D."/>
            <person name="Romero C.M."/>
            <person name="Sarria S."/>
            <person name="Selengut J."/>
            <person name="Shamblin C."/>
            <person name="Sullivan S.A."/>
            <person name="White O."/>
            <person name="Yu Y."/>
            <person name="Zafar N."/>
            <person name="Zhou L."/>
            <person name="Fraser C.M."/>
        </authorList>
    </citation>
    <scope>NUCLEOTIDE SEQUENCE [LARGE SCALE GENOMIC DNA]</scope>
    <source>
        <strain>ATCC 23344</strain>
    </source>
</reference>
<accession>Q62I87</accession>
<evidence type="ECO:0000255" key="1">
    <source>
        <dbReference type="HAMAP-Rule" id="MF_00651"/>
    </source>
</evidence>
<feature type="chain" id="PRO_0000172037" description="Putative pre-16S rRNA nuclease">
    <location>
        <begin position="1"/>
        <end position="146"/>
    </location>
</feature>
<gene>
    <name type="ordered locus">BMA1996</name>
</gene>
<protein>
    <recommendedName>
        <fullName evidence="1">Putative pre-16S rRNA nuclease</fullName>
        <ecNumber evidence="1">3.1.-.-</ecNumber>
    </recommendedName>
</protein>
<keyword id="KW-0963">Cytoplasm</keyword>
<keyword id="KW-0378">Hydrolase</keyword>
<keyword id="KW-0540">Nuclease</keyword>
<keyword id="KW-1185">Reference proteome</keyword>
<keyword id="KW-0690">Ribosome biogenesis</keyword>
<organism>
    <name type="scientific">Burkholderia mallei (strain ATCC 23344)</name>
    <dbReference type="NCBI Taxonomy" id="243160"/>
    <lineage>
        <taxon>Bacteria</taxon>
        <taxon>Pseudomonadati</taxon>
        <taxon>Pseudomonadota</taxon>
        <taxon>Betaproteobacteria</taxon>
        <taxon>Burkholderiales</taxon>
        <taxon>Burkholderiaceae</taxon>
        <taxon>Burkholderia</taxon>
        <taxon>pseudomallei group</taxon>
    </lineage>
</organism>
<name>YQGF_BURMA</name>
<dbReference type="EC" id="3.1.-.-" evidence="1"/>
<dbReference type="EMBL" id="CP000010">
    <property type="protein sequence ID" value="AAU50004.1"/>
    <property type="molecule type" value="Genomic_DNA"/>
</dbReference>
<dbReference type="RefSeq" id="YP_103583.1">
    <property type="nucleotide sequence ID" value="NC_006348.1"/>
</dbReference>
<dbReference type="SMR" id="Q62I87"/>
<dbReference type="KEGG" id="bma:BMA1996"/>
<dbReference type="PATRIC" id="fig|243160.12.peg.2063"/>
<dbReference type="eggNOG" id="COG0816">
    <property type="taxonomic scope" value="Bacteria"/>
</dbReference>
<dbReference type="HOGENOM" id="CLU_098240_3_2_4"/>
<dbReference type="Proteomes" id="UP000006693">
    <property type="component" value="Chromosome 1"/>
</dbReference>
<dbReference type="GO" id="GO:0005829">
    <property type="term" value="C:cytosol"/>
    <property type="evidence" value="ECO:0007669"/>
    <property type="project" value="TreeGrafter"/>
</dbReference>
<dbReference type="GO" id="GO:0004518">
    <property type="term" value="F:nuclease activity"/>
    <property type="evidence" value="ECO:0007669"/>
    <property type="project" value="UniProtKB-KW"/>
</dbReference>
<dbReference type="GO" id="GO:0000967">
    <property type="term" value="P:rRNA 5'-end processing"/>
    <property type="evidence" value="ECO:0007669"/>
    <property type="project" value="UniProtKB-UniRule"/>
</dbReference>
<dbReference type="CDD" id="cd16964">
    <property type="entry name" value="YqgF"/>
    <property type="match status" value="1"/>
</dbReference>
<dbReference type="Gene3D" id="3.30.420.140">
    <property type="entry name" value="YqgF/RNase H-like domain"/>
    <property type="match status" value="1"/>
</dbReference>
<dbReference type="HAMAP" id="MF_00651">
    <property type="entry name" value="Nuclease_YqgF"/>
    <property type="match status" value="1"/>
</dbReference>
<dbReference type="InterPro" id="IPR012337">
    <property type="entry name" value="RNaseH-like_sf"/>
</dbReference>
<dbReference type="InterPro" id="IPR005227">
    <property type="entry name" value="YqgF"/>
</dbReference>
<dbReference type="InterPro" id="IPR006641">
    <property type="entry name" value="YqgF/RNaseH-like_dom"/>
</dbReference>
<dbReference type="InterPro" id="IPR037027">
    <property type="entry name" value="YqgF/RNaseH-like_dom_sf"/>
</dbReference>
<dbReference type="NCBIfam" id="TIGR00250">
    <property type="entry name" value="RNAse_H_YqgF"/>
    <property type="match status" value="1"/>
</dbReference>
<dbReference type="PANTHER" id="PTHR33317">
    <property type="entry name" value="POLYNUCLEOTIDYL TRANSFERASE, RIBONUCLEASE H-LIKE SUPERFAMILY PROTEIN"/>
    <property type="match status" value="1"/>
</dbReference>
<dbReference type="PANTHER" id="PTHR33317:SF4">
    <property type="entry name" value="POLYNUCLEOTIDYL TRANSFERASE, RIBONUCLEASE H-LIKE SUPERFAMILY PROTEIN"/>
    <property type="match status" value="1"/>
</dbReference>
<dbReference type="Pfam" id="PF03652">
    <property type="entry name" value="RuvX"/>
    <property type="match status" value="1"/>
</dbReference>
<dbReference type="SMART" id="SM00732">
    <property type="entry name" value="YqgFc"/>
    <property type="match status" value="1"/>
</dbReference>
<dbReference type="SUPFAM" id="SSF53098">
    <property type="entry name" value="Ribonuclease H-like"/>
    <property type="match status" value="1"/>
</dbReference>
<comment type="function">
    <text evidence="1">Could be a nuclease involved in processing of the 5'-end of pre-16S rRNA.</text>
</comment>
<comment type="subcellular location">
    <subcellularLocation>
        <location evidence="1">Cytoplasm</location>
    </subcellularLocation>
</comment>
<comment type="similarity">
    <text evidence="1">Belongs to the YqgF nuclease family.</text>
</comment>